<name>SP2AB_BACAN</name>
<sequence length="146" mass="16246">MRNEMNLQFSALSQNESFARVTVAAFIAQLDPTMEELTEIKTVVSEAVTNAIIHGYEGNAEGVVYISVILEEAMVKLTIRDEGIGIFNLDEARQPLFTTKPELERSGMGFTIMENFMDEVEVISNESFGTTIHLTKYLSNSNALCN</sequence>
<evidence type="ECO:0000255" key="1">
    <source>
        <dbReference type="HAMAP-Rule" id="MF_00637"/>
    </source>
</evidence>
<reference key="1">
    <citation type="journal article" date="2003" name="Nature">
        <title>The genome sequence of Bacillus anthracis Ames and comparison to closely related bacteria.</title>
        <authorList>
            <person name="Read T.D."/>
            <person name="Peterson S.N."/>
            <person name="Tourasse N.J."/>
            <person name="Baillie L.W."/>
            <person name="Paulsen I.T."/>
            <person name="Nelson K.E."/>
            <person name="Tettelin H."/>
            <person name="Fouts D.E."/>
            <person name="Eisen J.A."/>
            <person name="Gill S.R."/>
            <person name="Holtzapple E.K."/>
            <person name="Okstad O.A."/>
            <person name="Helgason E."/>
            <person name="Rilstone J."/>
            <person name="Wu M."/>
            <person name="Kolonay J.F."/>
            <person name="Beanan M.J."/>
            <person name="Dodson R.J."/>
            <person name="Brinkac L.M."/>
            <person name="Gwinn M.L."/>
            <person name="DeBoy R.T."/>
            <person name="Madpu R."/>
            <person name="Daugherty S.C."/>
            <person name="Durkin A.S."/>
            <person name="Haft D.H."/>
            <person name="Nelson W.C."/>
            <person name="Peterson J.D."/>
            <person name="Pop M."/>
            <person name="Khouri H.M."/>
            <person name="Radune D."/>
            <person name="Benton J.L."/>
            <person name="Mahamoud Y."/>
            <person name="Jiang L."/>
            <person name="Hance I.R."/>
            <person name="Weidman J.F."/>
            <person name="Berry K.J."/>
            <person name="Plaut R.D."/>
            <person name="Wolf A.M."/>
            <person name="Watkins K.L."/>
            <person name="Nierman W.C."/>
            <person name="Hazen A."/>
            <person name="Cline R.T."/>
            <person name="Redmond C."/>
            <person name="Thwaite J.E."/>
            <person name="White O."/>
            <person name="Salzberg S.L."/>
            <person name="Thomason B."/>
            <person name="Friedlander A.M."/>
            <person name="Koehler T.M."/>
            <person name="Hanna P.C."/>
            <person name="Kolstoe A.-B."/>
            <person name="Fraser C.M."/>
        </authorList>
    </citation>
    <scope>NUCLEOTIDE SEQUENCE [LARGE SCALE GENOMIC DNA]</scope>
    <source>
        <strain>Ames / isolate Porton</strain>
    </source>
</reference>
<reference key="2">
    <citation type="journal article" date="2009" name="J. Bacteriol.">
        <title>The complete genome sequence of Bacillus anthracis Ames 'Ancestor'.</title>
        <authorList>
            <person name="Ravel J."/>
            <person name="Jiang L."/>
            <person name="Stanley S.T."/>
            <person name="Wilson M.R."/>
            <person name="Decker R.S."/>
            <person name="Read T.D."/>
            <person name="Worsham P."/>
            <person name="Keim P.S."/>
            <person name="Salzberg S.L."/>
            <person name="Fraser-Liggett C.M."/>
            <person name="Rasko D.A."/>
        </authorList>
    </citation>
    <scope>NUCLEOTIDE SEQUENCE [LARGE SCALE GENOMIC DNA]</scope>
    <source>
        <strain>Ames ancestor</strain>
    </source>
</reference>
<reference key="3">
    <citation type="submission" date="2004-01" db="EMBL/GenBank/DDBJ databases">
        <title>Complete genome sequence of Bacillus anthracis Sterne.</title>
        <authorList>
            <person name="Brettin T.S."/>
            <person name="Bruce D."/>
            <person name="Challacombe J.F."/>
            <person name="Gilna P."/>
            <person name="Han C."/>
            <person name="Hill K."/>
            <person name="Hitchcock P."/>
            <person name="Jackson P."/>
            <person name="Keim P."/>
            <person name="Longmire J."/>
            <person name="Lucas S."/>
            <person name="Okinaka R."/>
            <person name="Richardson P."/>
            <person name="Rubin E."/>
            <person name="Tice H."/>
        </authorList>
    </citation>
    <scope>NUCLEOTIDE SEQUENCE [LARGE SCALE GENOMIC DNA]</scope>
    <source>
        <strain>Sterne</strain>
    </source>
</reference>
<feature type="chain" id="PRO_0000203548" description="Anti-sigma F factor">
    <location>
        <begin position="1"/>
        <end position="146"/>
    </location>
</feature>
<comment type="function">
    <text evidence="1">Binds to sigma F and blocks its ability to form an RNA polymerase holoenzyme (E-sigma F). Phosphorylates SpoIIAA on a serine residue. This phosphorylation may enable SpoIIAA to act as an anti-anti-sigma factor that counteracts SpoIIAB and thus releases sigma F from inhibition.</text>
</comment>
<comment type="catalytic activity">
    <reaction evidence="1">
        <text>L-seryl-[protein] + ATP = O-phospho-L-seryl-[protein] + ADP + H(+)</text>
        <dbReference type="Rhea" id="RHEA:17989"/>
        <dbReference type="Rhea" id="RHEA-COMP:9863"/>
        <dbReference type="Rhea" id="RHEA-COMP:11604"/>
        <dbReference type="ChEBI" id="CHEBI:15378"/>
        <dbReference type="ChEBI" id="CHEBI:29999"/>
        <dbReference type="ChEBI" id="CHEBI:30616"/>
        <dbReference type="ChEBI" id="CHEBI:83421"/>
        <dbReference type="ChEBI" id="CHEBI:456216"/>
        <dbReference type="EC" id="2.7.11.1"/>
    </reaction>
</comment>
<comment type="catalytic activity">
    <reaction evidence="1">
        <text>L-threonyl-[protein] + ATP = O-phospho-L-threonyl-[protein] + ADP + H(+)</text>
        <dbReference type="Rhea" id="RHEA:46608"/>
        <dbReference type="Rhea" id="RHEA-COMP:11060"/>
        <dbReference type="Rhea" id="RHEA-COMP:11605"/>
        <dbReference type="ChEBI" id="CHEBI:15378"/>
        <dbReference type="ChEBI" id="CHEBI:30013"/>
        <dbReference type="ChEBI" id="CHEBI:30616"/>
        <dbReference type="ChEBI" id="CHEBI:61977"/>
        <dbReference type="ChEBI" id="CHEBI:456216"/>
        <dbReference type="EC" id="2.7.11.1"/>
    </reaction>
</comment>
<comment type="similarity">
    <text evidence="1">Belongs to the anti-sigma-factor family.</text>
</comment>
<organism>
    <name type="scientific">Bacillus anthracis</name>
    <dbReference type="NCBI Taxonomy" id="1392"/>
    <lineage>
        <taxon>Bacteria</taxon>
        <taxon>Bacillati</taxon>
        <taxon>Bacillota</taxon>
        <taxon>Bacilli</taxon>
        <taxon>Bacillales</taxon>
        <taxon>Bacillaceae</taxon>
        <taxon>Bacillus</taxon>
        <taxon>Bacillus cereus group</taxon>
    </lineage>
</organism>
<dbReference type="EC" id="2.7.11.1" evidence="1"/>
<dbReference type="EMBL" id="AE016879">
    <property type="protein sequence ID" value="AAP28014.1"/>
    <property type="molecule type" value="Genomic_DNA"/>
</dbReference>
<dbReference type="EMBL" id="AE017334">
    <property type="protein sequence ID" value="AAT33413.1"/>
    <property type="molecule type" value="Genomic_DNA"/>
</dbReference>
<dbReference type="EMBL" id="AE017225">
    <property type="protein sequence ID" value="AAT56285.1"/>
    <property type="molecule type" value="Genomic_DNA"/>
</dbReference>
<dbReference type="RefSeq" id="NP_846528.1">
    <property type="nucleotide sequence ID" value="NC_003997.3"/>
</dbReference>
<dbReference type="RefSeq" id="WP_001243400.1">
    <property type="nucleotide sequence ID" value="NZ_WXXJ01000027.1"/>
</dbReference>
<dbReference type="RefSeq" id="YP_030234.1">
    <property type="nucleotide sequence ID" value="NC_005945.1"/>
</dbReference>
<dbReference type="SMR" id="Q81MF4"/>
<dbReference type="STRING" id="261594.GBAA_4295"/>
<dbReference type="DNASU" id="1086822"/>
<dbReference type="GeneID" id="92883500"/>
<dbReference type="KEGG" id="ban:BA_4295"/>
<dbReference type="KEGG" id="bar:GBAA_4295"/>
<dbReference type="KEGG" id="bat:BAS3984"/>
<dbReference type="PATRIC" id="fig|198094.11.peg.4265"/>
<dbReference type="eggNOG" id="COG2172">
    <property type="taxonomic scope" value="Bacteria"/>
</dbReference>
<dbReference type="HOGENOM" id="CLU_090336_11_0_9"/>
<dbReference type="OMA" id="HAYEDKI"/>
<dbReference type="OrthoDB" id="9768808at2"/>
<dbReference type="Proteomes" id="UP000000427">
    <property type="component" value="Chromosome"/>
</dbReference>
<dbReference type="Proteomes" id="UP000000594">
    <property type="component" value="Chromosome"/>
</dbReference>
<dbReference type="GO" id="GO:0005524">
    <property type="term" value="F:ATP binding"/>
    <property type="evidence" value="ECO:0007669"/>
    <property type="project" value="UniProtKB-KW"/>
</dbReference>
<dbReference type="GO" id="GO:0106310">
    <property type="term" value="F:protein serine kinase activity"/>
    <property type="evidence" value="ECO:0007669"/>
    <property type="project" value="RHEA"/>
</dbReference>
<dbReference type="GO" id="GO:0004674">
    <property type="term" value="F:protein serine/threonine kinase activity"/>
    <property type="evidence" value="ECO:0007669"/>
    <property type="project" value="UniProtKB-KW"/>
</dbReference>
<dbReference type="GO" id="GO:0016989">
    <property type="term" value="F:sigma factor antagonist activity"/>
    <property type="evidence" value="ECO:0007669"/>
    <property type="project" value="InterPro"/>
</dbReference>
<dbReference type="GO" id="GO:0030436">
    <property type="term" value="P:asexual sporulation"/>
    <property type="evidence" value="ECO:0007669"/>
    <property type="project" value="UniProtKB-UniRule"/>
</dbReference>
<dbReference type="GO" id="GO:0042174">
    <property type="term" value="P:negative regulation of sporulation resulting in formation of a cellular spore"/>
    <property type="evidence" value="ECO:0007669"/>
    <property type="project" value="InterPro"/>
</dbReference>
<dbReference type="GO" id="GO:0030435">
    <property type="term" value="P:sporulation resulting in formation of a cellular spore"/>
    <property type="evidence" value="ECO:0007669"/>
    <property type="project" value="UniProtKB-KW"/>
</dbReference>
<dbReference type="FunFam" id="3.30.565.10:FF:000022">
    <property type="entry name" value="Anti-sigma F factor"/>
    <property type="match status" value="1"/>
</dbReference>
<dbReference type="Gene3D" id="3.30.565.10">
    <property type="entry name" value="Histidine kinase-like ATPase, C-terminal domain"/>
    <property type="match status" value="1"/>
</dbReference>
<dbReference type="HAMAP" id="MF_00637">
    <property type="entry name" value="Anti_sigma_F"/>
    <property type="match status" value="1"/>
</dbReference>
<dbReference type="InterPro" id="IPR050267">
    <property type="entry name" value="Anti-sigma-factor_SerPK"/>
</dbReference>
<dbReference type="InterPro" id="IPR010194">
    <property type="entry name" value="Anti-sigma_F"/>
</dbReference>
<dbReference type="InterPro" id="IPR036890">
    <property type="entry name" value="HATPase_C_sf"/>
</dbReference>
<dbReference type="NCBIfam" id="TIGR01925">
    <property type="entry name" value="spIIAB"/>
    <property type="match status" value="1"/>
</dbReference>
<dbReference type="PANTHER" id="PTHR35526:SF3">
    <property type="entry name" value="ANTI-SIGMA-F FACTOR RSBW"/>
    <property type="match status" value="1"/>
</dbReference>
<dbReference type="PANTHER" id="PTHR35526">
    <property type="entry name" value="ANTI-SIGMA-F FACTOR RSBW-RELATED"/>
    <property type="match status" value="1"/>
</dbReference>
<dbReference type="Pfam" id="PF13581">
    <property type="entry name" value="HATPase_c_2"/>
    <property type="match status" value="1"/>
</dbReference>
<dbReference type="SMART" id="SM00387">
    <property type="entry name" value="HATPase_c"/>
    <property type="match status" value="1"/>
</dbReference>
<dbReference type="SUPFAM" id="SSF55874">
    <property type="entry name" value="ATPase domain of HSP90 chaperone/DNA topoisomerase II/histidine kinase"/>
    <property type="match status" value="1"/>
</dbReference>
<keyword id="KW-0067">ATP-binding</keyword>
<keyword id="KW-0418">Kinase</keyword>
<keyword id="KW-0547">Nucleotide-binding</keyword>
<keyword id="KW-1185">Reference proteome</keyword>
<keyword id="KW-0723">Serine/threonine-protein kinase</keyword>
<keyword id="KW-0749">Sporulation</keyword>
<keyword id="KW-0808">Transferase</keyword>
<proteinExistence type="inferred from homology"/>
<protein>
    <recommendedName>
        <fullName evidence="1">Anti-sigma F factor</fullName>
        <ecNumber evidence="1">2.7.11.1</ecNumber>
    </recommendedName>
    <alternativeName>
        <fullName evidence="1">Stage II sporulation protein AB</fullName>
    </alternativeName>
</protein>
<accession>Q81MF4</accession>
<accession>Q6HTV4</accession>
<accession>Q6KN39</accession>
<gene>
    <name evidence="1" type="primary">spoIIAB</name>
    <name type="ordered locus">BA_4295</name>
    <name type="ordered locus">GBAA_4295</name>
    <name type="ordered locus">BAS3984</name>
</gene>